<dbReference type="EMBL" id="AM263198">
    <property type="protein sequence ID" value="CAK22021.1"/>
    <property type="molecule type" value="Genomic_DNA"/>
</dbReference>
<dbReference type="RefSeq" id="WP_011703304.1">
    <property type="nucleotide sequence ID" value="NC_008555.1"/>
</dbReference>
<dbReference type="SMR" id="A0ALY9"/>
<dbReference type="STRING" id="386043.lwe2603"/>
<dbReference type="GeneID" id="61190527"/>
<dbReference type="KEGG" id="lwe:lwe2603"/>
<dbReference type="eggNOG" id="COG0480">
    <property type="taxonomic scope" value="Bacteria"/>
</dbReference>
<dbReference type="HOGENOM" id="CLU_002794_4_1_9"/>
<dbReference type="OrthoDB" id="9804431at2"/>
<dbReference type="Proteomes" id="UP000000779">
    <property type="component" value="Chromosome"/>
</dbReference>
<dbReference type="GO" id="GO:0005737">
    <property type="term" value="C:cytoplasm"/>
    <property type="evidence" value="ECO:0007669"/>
    <property type="project" value="UniProtKB-SubCell"/>
</dbReference>
<dbReference type="GO" id="GO:0005525">
    <property type="term" value="F:GTP binding"/>
    <property type="evidence" value="ECO:0007669"/>
    <property type="project" value="UniProtKB-UniRule"/>
</dbReference>
<dbReference type="GO" id="GO:0003924">
    <property type="term" value="F:GTPase activity"/>
    <property type="evidence" value="ECO:0007669"/>
    <property type="project" value="InterPro"/>
</dbReference>
<dbReference type="GO" id="GO:0003746">
    <property type="term" value="F:translation elongation factor activity"/>
    <property type="evidence" value="ECO:0007669"/>
    <property type="project" value="UniProtKB-UniRule"/>
</dbReference>
<dbReference type="GO" id="GO:0032790">
    <property type="term" value="P:ribosome disassembly"/>
    <property type="evidence" value="ECO:0007669"/>
    <property type="project" value="TreeGrafter"/>
</dbReference>
<dbReference type="CDD" id="cd01886">
    <property type="entry name" value="EF-G"/>
    <property type="match status" value="1"/>
</dbReference>
<dbReference type="CDD" id="cd16262">
    <property type="entry name" value="EFG_III"/>
    <property type="match status" value="1"/>
</dbReference>
<dbReference type="CDD" id="cd01434">
    <property type="entry name" value="EFG_mtEFG1_IV"/>
    <property type="match status" value="1"/>
</dbReference>
<dbReference type="CDD" id="cd03713">
    <property type="entry name" value="EFG_mtEFG_C"/>
    <property type="match status" value="1"/>
</dbReference>
<dbReference type="CDD" id="cd04088">
    <property type="entry name" value="EFG_mtEFG_II"/>
    <property type="match status" value="1"/>
</dbReference>
<dbReference type="FunFam" id="2.40.30.10:FF:000006">
    <property type="entry name" value="Elongation factor G"/>
    <property type="match status" value="1"/>
</dbReference>
<dbReference type="FunFam" id="3.30.230.10:FF:000003">
    <property type="entry name" value="Elongation factor G"/>
    <property type="match status" value="1"/>
</dbReference>
<dbReference type="FunFam" id="3.30.70.240:FF:000001">
    <property type="entry name" value="Elongation factor G"/>
    <property type="match status" value="1"/>
</dbReference>
<dbReference type="FunFam" id="3.30.70.870:FF:000001">
    <property type="entry name" value="Elongation factor G"/>
    <property type="match status" value="1"/>
</dbReference>
<dbReference type="FunFam" id="3.40.50.300:FF:000029">
    <property type="entry name" value="Elongation factor G"/>
    <property type="match status" value="1"/>
</dbReference>
<dbReference type="Gene3D" id="3.30.230.10">
    <property type="match status" value="1"/>
</dbReference>
<dbReference type="Gene3D" id="3.30.70.240">
    <property type="match status" value="1"/>
</dbReference>
<dbReference type="Gene3D" id="3.30.70.870">
    <property type="entry name" value="Elongation Factor G (Translational Gtpase), domain 3"/>
    <property type="match status" value="1"/>
</dbReference>
<dbReference type="Gene3D" id="3.40.50.300">
    <property type="entry name" value="P-loop containing nucleotide triphosphate hydrolases"/>
    <property type="match status" value="1"/>
</dbReference>
<dbReference type="Gene3D" id="2.40.30.10">
    <property type="entry name" value="Translation factors"/>
    <property type="match status" value="1"/>
</dbReference>
<dbReference type="HAMAP" id="MF_00054_B">
    <property type="entry name" value="EF_G_EF_2_B"/>
    <property type="match status" value="1"/>
</dbReference>
<dbReference type="InterPro" id="IPR041095">
    <property type="entry name" value="EFG_II"/>
</dbReference>
<dbReference type="InterPro" id="IPR009022">
    <property type="entry name" value="EFG_III"/>
</dbReference>
<dbReference type="InterPro" id="IPR035647">
    <property type="entry name" value="EFG_III/V"/>
</dbReference>
<dbReference type="InterPro" id="IPR047872">
    <property type="entry name" value="EFG_IV"/>
</dbReference>
<dbReference type="InterPro" id="IPR035649">
    <property type="entry name" value="EFG_V"/>
</dbReference>
<dbReference type="InterPro" id="IPR000640">
    <property type="entry name" value="EFG_V-like"/>
</dbReference>
<dbReference type="InterPro" id="IPR004161">
    <property type="entry name" value="EFTu-like_2"/>
</dbReference>
<dbReference type="InterPro" id="IPR031157">
    <property type="entry name" value="G_TR_CS"/>
</dbReference>
<dbReference type="InterPro" id="IPR027417">
    <property type="entry name" value="P-loop_NTPase"/>
</dbReference>
<dbReference type="InterPro" id="IPR020568">
    <property type="entry name" value="Ribosomal_Su5_D2-typ_SF"/>
</dbReference>
<dbReference type="InterPro" id="IPR014721">
    <property type="entry name" value="Ribsml_uS5_D2-typ_fold_subgr"/>
</dbReference>
<dbReference type="InterPro" id="IPR005225">
    <property type="entry name" value="Small_GTP-bd"/>
</dbReference>
<dbReference type="InterPro" id="IPR000795">
    <property type="entry name" value="T_Tr_GTP-bd_dom"/>
</dbReference>
<dbReference type="InterPro" id="IPR009000">
    <property type="entry name" value="Transl_B-barrel_sf"/>
</dbReference>
<dbReference type="InterPro" id="IPR004540">
    <property type="entry name" value="Transl_elong_EFG/EF2"/>
</dbReference>
<dbReference type="InterPro" id="IPR005517">
    <property type="entry name" value="Transl_elong_EFG/EF2_IV"/>
</dbReference>
<dbReference type="NCBIfam" id="TIGR00484">
    <property type="entry name" value="EF-G"/>
    <property type="match status" value="1"/>
</dbReference>
<dbReference type="NCBIfam" id="NF009379">
    <property type="entry name" value="PRK12740.1-3"/>
    <property type="match status" value="1"/>
</dbReference>
<dbReference type="NCBIfam" id="NF009381">
    <property type="entry name" value="PRK12740.1-5"/>
    <property type="match status" value="1"/>
</dbReference>
<dbReference type="NCBIfam" id="TIGR00231">
    <property type="entry name" value="small_GTP"/>
    <property type="match status" value="1"/>
</dbReference>
<dbReference type="PANTHER" id="PTHR43261:SF1">
    <property type="entry name" value="RIBOSOME-RELEASING FACTOR 2, MITOCHONDRIAL"/>
    <property type="match status" value="1"/>
</dbReference>
<dbReference type="PANTHER" id="PTHR43261">
    <property type="entry name" value="TRANSLATION ELONGATION FACTOR G-RELATED"/>
    <property type="match status" value="1"/>
</dbReference>
<dbReference type="Pfam" id="PF00679">
    <property type="entry name" value="EFG_C"/>
    <property type="match status" value="1"/>
</dbReference>
<dbReference type="Pfam" id="PF14492">
    <property type="entry name" value="EFG_III"/>
    <property type="match status" value="1"/>
</dbReference>
<dbReference type="Pfam" id="PF03764">
    <property type="entry name" value="EFG_IV"/>
    <property type="match status" value="1"/>
</dbReference>
<dbReference type="Pfam" id="PF00009">
    <property type="entry name" value="GTP_EFTU"/>
    <property type="match status" value="1"/>
</dbReference>
<dbReference type="Pfam" id="PF03144">
    <property type="entry name" value="GTP_EFTU_D2"/>
    <property type="match status" value="1"/>
</dbReference>
<dbReference type="PRINTS" id="PR00315">
    <property type="entry name" value="ELONGATNFCT"/>
</dbReference>
<dbReference type="SMART" id="SM00838">
    <property type="entry name" value="EFG_C"/>
    <property type="match status" value="1"/>
</dbReference>
<dbReference type="SMART" id="SM00889">
    <property type="entry name" value="EFG_IV"/>
    <property type="match status" value="1"/>
</dbReference>
<dbReference type="SUPFAM" id="SSF54980">
    <property type="entry name" value="EF-G C-terminal domain-like"/>
    <property type="match status" value="2"/>
</dbReference>
<dbReference type="SUPFAM" id="SSF52540">
    <property type="entry name" value="P-loop containing nucleoside triphosphate hydrolases"/>
    <property type="match status" value="1"/>
</dbReference>
<dbReference type="SUPFAM" id="SSF54211">
    <property type="entry name" value="Ribosomal protein S5 domain 2-like"/>
    <property type="match status" value="1"/>
</dbReference>
<dbReference type="SUPFAM" id="SSF50447">
    <property type="entry name" value="Translation proteins"/>
    <property type="match status" value="1"/>
</dbReference>
<dbReference type="PROSITE" id="PS00301">
    <property type="entry name" value="G_TR_1"/>
    <property type="match status" value="1"/>
</dbReference>
<dbReference type="PROSITE" id="PS51722">
    <property type="entry name" value="G_TR_2"/>
    <property type="match status" value="1"/>
</dbReference>
<gene>
    <name evidence="1" type="primary">fusA</name>
    <name type="ordered locus">lwe2603</name>
</gene>
<comment type="function">
    <text evidence="1">Catalyzes the GTP-dependent ribosomal translocation step during translation elongation. During this step, the ribosome changes from the pre-translocational (PRE) to the post-translocational (POST) state as the newly formed A-site-bound peptidyl-tRNA and P-site-bound deacylated tRNA move to the P and E sites, respectively. Catalyzes the coordinated movement of the two tRNA molecules, the mRNA and conformational changes in the ribosome.</text>
</comment>
<comment type="subcellular location">
    <subcellularLocation>
        <location evidence="1">Cytoplasm</location>
    </subcellularLocation>
</comment>
<comment type="similarity">
    <text evidence="1">Belongs to the TRAFAC class translation factor GTPase superfamily. Classic translation factor GTPase family. EF-G/EF-2 subfamily.</text>
</comment>
<accession>A0ALY9</accession>
<sequence length="695" mass="76836">MAREFSLEKTRNIGIMAHIDAGKTTTTERILFYTGRIHKIGETHEGASQMDWMEQEQERGITITSAATTAQWKGYRVNIIDTPGHVDFTVEVERSLRVLDGAVAVLDAQSGVEPQTETVWRQATTYGVPRVVFVNKMDKIGADFLYSVGTLHERLAANAHPIQLPIGAEDTFEGIIDLIEMNALYYEDDLGNDPHVKEIPADLKDLADEYRGKLVEAVAELDEELMMKYLEGEEITKEELKAGIRKGTLNVEFYPVVCGTAFKNKGVQPMLDAVLDYLPAPTDVPAINGVLPDGEEAARHADDSEPFSSLAFKVMTDPYVGRLTFFRVYSGTLNSGSYVQNSTKGKRERVGRILQMHANHREEISIVYAGDIAAAVGLKDTTTGDTLCDEKEQIILESMEFPEPVIQVAIEPKSKADQDKMGQALAKLAEEDPTFRAETDQETGQTLISGMGELHLDILVDRMRREFRVEANVGDPQVSYRETFRKSAQVEGKFVRQSGGRGQYGHVWIEFGPNEEGKGFEFENAIVGGVVPREYIPAVQAGLEGALDNGVLAGYPLIDIKAKLYDGSYHDVDSNEMAFKVAASMALRNAAKKCDPVILEPMMAVEVVIPEEYLGDIMGNITSRRGRVDGMEARGNAQVVRAFVPLANMFGYATHLRSGTQGRGVYTMQFDHYEEVPKSIAEEIIKANGGNNKED</sequence>
<proteinExistence type="inferred from homology"/>
<protein>
    <recommendedName>
        <fullName evidence="1">Elongation factor G</fullName>
        <shortName evidence="1">EF-G</shortName>
    </recommendedName>
</protein>
<organism>
    <name type="scientific">Listeria welshimeri serovar 6b (strain ATCC 35897 / DSM 20650 / CCUG 15529 / CIP 8149 / NCTC 11857 / SLCC 5334 / V8)</name>
    <dbReference type="NCBI Taxonomy" id="386043"/>
    <lineage>
        <taxon>Bacteria</taxon>
        <taxon>Bacillati</taxon>
        <taxon>Bacillota</taxon>
        <taxon>Bacilli</taxon>
        <taxon>Bacillales</taxon>
        <taxon>Listeriaceae</taxon>
        <taxon>Listeria</taxon>
    </lineage>
</organism>
<keyword id="KW-0963">Cytoplasm</keyword>
<keyword id="KW-0251">Elongation factor</keyword>
<keyword id="KW-0342">GTP-binding</keyword>
<keyword id="KW-0547">Nucleotide-binding</keyword>
<keyword id="KW-0648">Protein biosynthesis</keyword>
<reference key="1">
    <citation type="journal article" date="2006" name="J. Bacteriol.">
        <title>Whole-genome sequence of Listeria welshimeri reveals common steps in genome reduction with Listeria innocua as compared to Listeria monocytogenes.</title>
        <authorList>
            <person name="Hain T."/>
            <person name="Steinweg C."/>
            <person name="Kuenne C.T."/>
            <person name="Billion A."/>
            <person name="Ghai R."/>
            <person name="Chatterjee S.S."/>
            <person name="Domann E."/>
            <person name="Kaerst U."/>
            <person name="Goesmann A."/>
            <person name="Bekel T."/>
            <person name="Bartels D."/>
            <person name="Kaiser O."/>
            <person name="Meyer F."/>
            <person name="Puehler A."/>
            <person name="Weisshaar B."/>
            <person name="Wehland J."/>
            <person name="Liang C."/>
            <person name="Dandekar T."/>
            <person name="Lampidis R."/>
            <person name="Kreft J."/>
            <person name="Goebel W."/>
            <person name="Chakraborty T."/>
        </authorList>
    </citation>
    <scope>NUCLEOTIDE SEQUENCE [LARGE SCALE GENOMIC DNA]</scope>
    <source>
        <strain>ATCC 35897 / DSM 20650 / CCUG 15529 / CIP 8149 / NCTC 11857 / SLCC 5334 / V8</strain>
    </source>
</reference>
<feature type="chain" id="PRO_1000008841" description="Elongation factor G">
    <location>
        <begin position="1"/>
        <end position="695"/>
    </location>
</feature>
<feature type="domain" description="tr-type G">
    <location>
        <begin position="8"/>
        <end position="282"/>
    </location>
</feature>
<feature type="binding site" evidence="1">
    <location>
        <begin position="17"/>
        <end position="24"/>
    </location>
    <ligand>
        <name>GTP</name>
        <dbReference type="ChEBI" id="CHEBI:37565"/>
    </ligand>
</feature>
<feature type="binding site" evidence="1">
    <location>
        <begin position="81"/>
        <end position="85"/>
    </location>
    <ligand>
        <name>GTP</name>
        <dbReference type="ChEBI" id="CHEBI:37565"/>
    </ligand>
</feature>
<feature type="binding site" evidence="1">
    <location>
        <begin position="135"/>
        <end position="138"/>
    </location>
    <ligand>
        <name>GTP</name>
        <dbReference type="ChEBI" id="CHEBI:37565"/>
    </ligand>
</feature>
<name>EFG_LISW6</name>
<evidence type="ECO:0000255" key="1">
    <source>
        <dbReference type="HAMAP-Rule" id="MF_00054"/>
    </source>
</evidence>